<comment type="function">
    <text evidence="1">Catalyzes the last two steps in the biosynthesis of 5-methylaminomethyl-2-thiouridine (mnm(5)s(2)U) at the wobble position (U34) in tRNA. Catalyzes the FAD-dependent demodification of cmnm(5)s(2)U34 to nm(5)s(2)U34, followed by the transfer of a methyl group from S-adenosyl-L-methionine to nm(5)s(2)U34, to form mnm(5)s(2)U34.</text>
</comment>
<comment type="catalytic activity">
    <reaction evidence="1">
        <text>5-aminomethyl-2-thiouridine(34) in tRNA + S-adenosyl-L-methionine = 5-methylaminomethyl-2-thiouridine(34) in tRNA + S-adenosyl-L-homocysteine + H(+)</text>
        <dbReference type="Rhea" id="RHEA:19569"/>
        <dbReference type="Rhea" id="RHEA-COMP:10195"/>
        <dbReference type="Rhea" id="RHEA-COMP:10197"/>
        <dbReference type="ChEBI" id="CHEBI:15378"/>
        <dbReference type="ChEBI" id="CHEBI:57856"/>
        <dbReference type="ChEBI" id="CHEBI:59789"/>
        <dbReference type="ChEBI" id="CHEBI:74454"/>
        <dbReference type="ChEBI" id="CHEBI:74455"/>
        <dbReference type="EC" id="2.1.1.61"/>
    </reaction>
</comment>
<comment type="cofactor">
    <cofactor evidence="1">
        <name>FAD</name>
        <dbReference type="ChEBI" id="CHEBI:57692"/>
    </cofactor>
</comment>
<comment type="subcellular location">
    <subcellularLocation>
        <location evidence="1">Cytoplasm</location>
    </subcellularLocation>
</comment>
<comment type="similarity">
    <text evidence="1">In the N-terminal section; belongs to the methyltransferase superfamily. tRNA (mnm(5)s(2)U34)-methyltransferase family.</text>
</comment>
<comment type="similarity">
    <text evidence="1">In the C-terminal section; belongs to the DAO family.</text>
</comment>
<comment type="sequence caution" evidence="2">
    <conflict type="erroneous initiation">
        <sequence resource="EMBL-CDS" id="ABN02321"/>
    </conflict>
</comment>
<name>MNMC_BURM9</name>
<keyword id="KW-0963">Cytoplasm</keyword>
<keyword id="KW-0274">FAD</keyword>
<keyword id="KW-0285">Flavoprotein</keyword>
<keyword id="KW-0489">Methyltransferase</keyword>
<keyword id="KW-0511">Multifunctional enzyme</keyword>
<keyword id="KW-0560">Oxidoreductase</keyword>
<keyword id="KW-0949">S-adenosyl-L-methionine</keyword>
<keyword id="KW-0808">Transferase</keyword>
<keyword id="KW-0819">tRNA processing</keyword>
<proteinExistence type="inferred from homology"/>
<sequence>MTDRIVPATLVFREDGTVVSPLYGDIYHSAAGALAQADHVFIRGNGLPERWRHERAFTIIETGFGTGCNFLATWAAWRADPSHCERLHFVSVEKHPFAREDLRRAAAHIVAYTTITTITPIAPLVDELANAWPALTPGVHRLEFDDGRVTLTLVFGDALDVLPNLALRAHAFYLDGFAPSKNADLWSPAIFKSLAKLADERATFATYTSSGAVKRALDEAGFAYRKVDGFAGKRAMLVGEFAPRWRVRRHEPPRAFSTDRRDAIVIGAGLAGCAVVERLAARGWHVTLIERRERIASEASGNPAGVFHPMIARDDNLAARLSRAGFLHALHRWRALERAGHAFSRSTHGLVQLATSDDEFERMRESIDALGVPAELASALSRDDARALLRTDVAHGGWLFAQGGSISPATLAAAQCAAAGDRLSRIVGVEIARLERGGDGRWRALDASGATIAQASVVVVANAADAARIAGLRHAPTQRVRGQLTLLPPGSAPAVPLPVIGDGYVVPLANGVTLTGATYEPDDTDATPREAGHRENLERLERLLPAFSANALDAGALAGRVGFRCVASDRLPLVGELGDEAAAAREAAALTGARLRDVPRATGLYGAFGYGSRGLVWAALGAELIAAQIDGEPWPLERELAEAIDPARFLVRALRHGRVA</sequence>
<feature type="chain" id="PRO_0000347953" description="tRNA 5-methylaminomethyl-2-thiouridine biosynthesis bifunctional protein MnmC">
    <location>
        <begin position="1"/>
        <end position="660"/>
    </location>
</feature>
<feature type="region of interest" description="tRNA (mnm(5)s(2)U34)-methyltransferase">
    <location>
        <begin position="1"/>
        <end position="242"/>
    </location>
</feature>
<feature type="region of interest" description="FAD-dependent cmnm(5)s(2)U34 oxidoreductase">
    <location>
        <begin position="266"/>
        <end position="660"/>
    </location>
</feature>
<protein>
    <recommendedName>
        <fullName evidence="1">tRNA 5-methylaminomethyl-2-thiouridine biosynthesis bifunctional protein MnmC</fullName>
        <shortName evidence="1">tRNA mnm(5)s(2)U biosynthesis bifunctional protein</shortName>
    </recommendedName>
    <domain>
        <recommendedName>
            <fullName evidence="1">tRNA (mnm(5)s(2)U34)-methyltransferase</fullName>
            <ecNumber evidence="1">2.1.1.61</ecNumber>
        </recommendedName>
    </domain>
    <domain>
        <recommendedName>
            <fullName evidence="1">FAD-dependent cmnm(5)s(2)U34 oxidoreductase</fullName>
            <ecNumber evidence="1">1.5.-.-</ecNumber>
        </recommendedName>
    </domain>
</protein>
<evidence type="ECO:0000255" key="1">
    <source>
        <dbReference type="HAMAP-Rule" id="MF_01102"/>
    </source>
</evidence>
<evidence type="ECO:0000305" key="2"/>
<reference key="1">
    <citation type="journal article" date="2010" name="Genome Biol. Evol.">
        <title>Continuing evolution of Burkholderia mallei through genome reduction and large-scale rearrangements.</title>
        <authorList>
            <person name="Losada L."/>
            <person name="Ronning C.M."/>
            <person name="DeShazer D."/>
            <person name="Woods D."/>
            <person name="Fedorova N."/>
            <person name="Kim H.S."/>
            <person name="Shabalina S.A."/>
            <person name="Pearson T.R."/>
            <person name="Brinkac L."/>
            <person name="Tan P."/>
            <person name="Nandi T."/>
            <person name="Crabtree J."/>
            <person name="Badger J."/>
            <person name="Beckstrom-Sternberg S."/>
            <person name="Saqib M."/>
            <person name="Schutzer S.E."/>
            <person name="Keim P."/>
            <person name="Nierman W.C."/>
        </authorList>
    </citation>
    <scope>NUCLEOTIDE SEQUENCE [LARGE SCALE GENOMIC DNA]</scope>
    <source>
        <strain>NCTC 10229</strain>
    </source>
</reference>
<accession>A2S6N9</accession>
<dbReference type="EC" id="2.1.1.61" evidence="1"/>
<dbReference type="EC" id="1.5.-.-" evidence="1"/>
<dbReference type="EMBL" id="CP000546">
    <property type="protein sequence ID" value="ABN02321.1"/>
    <property type="status" value="ALT_INIT"/>
    <property type="molecule type" value="Genomic_DNA"/>
</dbReference>
<dbReference type="RefSeq" id="WP_011204185.1">
    <property type="nucleotide sequence ID" value="NC_008836.1"/>
</dbReference>
<dbReference type="SMR" id="A2S6N9"/>
<dbReference type="GeneID" id="92980584"/>
<dbReference type="KEGG" id="bml:BMA10229_A1628"/>
<dbReference type="HOGENOM" id="CLU_022427_1_0_4"/>
<dbReference type="Proteomes" id="UP000002283">
    <property type="component" value="Chromosome I"/>
</dbReference>
<dbReference type="GO" id="GO:0005737">
    <property type="term" value="C:cytoplasm"/>
    <property type="evidence" value="ECO:0007669"/>
    <property type="project" value="UniProtKB-SubCell"/>
</dbReference>
<dbReference type="GO" id="GO:0050660">
    <property type="term" value="F:flavin adenine dinucleotide binding"/>
    <property type="evidence" value="ECO:0007669"/>
    <property type="project" value="UniProtKB-UniRule"/>
</dbReference>
<dbReference type="GO" id="GO:0016645">
    <property type="term" value="F:oxidoreductase activity, acting on the CH-NH group of donors"/>
    <property type="evidence" value="ECO:0007669"/>
    <property type="project" value="InterPro"/>
</dbReference>
<dbReference type="GO" id="GO:0004808">
    <property type="term" value="F:tRNA (5-methylaminomethyl-2-thiouridylate)(34)-methyltransferase activity"/>
    <property type="evidence" value="ECO:0007669"/>
    <property type="project" value="UniProtKB-EC"/>
</dbReference>
<dbReference type="GO" id="GO:0032259">
    <property type="term" value="P:methylation"/>
    <property type="evidence" value="ECO:0007669"/>
    <property type="project" value="UniProtKB-KW"/>
</dbReference>
<dbReference type="GO" id="GO:0002097">
    <property type="term" value="P:tRNA wobble base modification"/>
    <property type="evidence" value="ECO:0007669"/>
    <property type="project" value="UniProtKB-UniRule"/>
</dbReference>
<dbReference type="Gene3D" id="3.30.9.10">
    <property type="entry name" value="D-Amino Acid Oxidase, subunit A, domain 2"/>
    <property type="match status" value="1"/>
</dbReference>
<dbReference type="Gene3D" id="3.50.50.60">
    <property type="entry name" value="FAD/NAD(P)-binding domain"/>
    <property type="match status" value="1"/>
</dbReference>
<dbReference type="Gene3D" id="3.40.50.150">
    <property type="entry name" value="Vaccinia Virus protein VP39"/>
    <property type="match status" value="1"/>
</dbReference>
<dbReference type="HAMAP" id="MF_01102">
    <property type="entry name" value="MnmC"/>
    <property type="match status" value="1"/>
</dbReference>
<dbReference type="InterPro" id="IPR006076">
    <property type="entry name" value="FAD-dep_OxRdtase"/>
</dbReference>
<dbReference type="InterPro" id="IPR036188">
    <property type="entry name" value="FAD/NAD-bd_sf"/>
</dbReference>
<dbReference type="InterPro" id="IPR008471">
    <property type="entry name" value="MnmC-like_methylTransf"/>
</dbReference>
<dbReference type="InterPro" id="IPR029063">
    <property type="entry name" value="SAM-dependent_MTases_sf"/>
</dbReference>
<dbReference type="InterPro" id="IPR023032">
    <property type="entry name" value="tRNA_MAMT_biosynth_bifunc_MnmC"/>
</dbReference>
<dbReference type="InterPro" id="IPR047785">
    <property type="entry name" value="tRNA_MNMC2"/>
</dbReference>
<dbReference type="InterPro" id="IPR017610">
    <property type="entry name" value="tRNA_S-uridine_synth_MnmC_C"/>
</dbReference>
<dbReference type="NCBIfam" id="TIGR03197">
    <property type="entry name" value="MnmC_Cterm"/>
    <property type="match status" value="1"/>
</dbReference>
<dbReference type="NCBIfam" id="NF002481">
    <property type="entry name" value="PRK01747.1-2"/>
    <property type="match status" value="1"/>
</dbReference>
<dbReference type="NCBIfam" id="NF002483">
    <property type="entry name" value="PRK01747.1-4"/>
    <property type="match status" value="1"/>
</dbReference>
<dbReference type="NCBIfam" id="NF033855">
    <property type="entry name" value="tRNA_MNMC2"/>
    <property type="match status" value="1"/>
</dbReference>
<dbReference type="PANTHER" id="PTHR13847">
    <property type="entry name" value="SARCOSINE DEHYDROGENASE-RELATED"/>
    <property type="match status" value="1"/>
</dbReference>
<dbReference type="PANTHER" id="PTHR13847:SF283">
    <property type="entry name" value="TRNA 5-METHYLAMINOMETHYL-2-THIOURIDINE BIOSYNTHESIS BIFUNCTIONAL PROTEIN MNMC"/>
    <property type="match status" value="1"/>
</dbReference>
<dbReference type="Pfam" id="PF01266">
    <property type="entry name" value="DAO"/>
    <property type="match status" value="1"/>
</dbReference>
<dbReference type="Pfam" id="PF05430">
    <property type="entry name" value="Methyltransf_30"/>
    <property type="match status" value="1"/>
</dbReference>
<dbReference type="SUPFAM" id="SSF54373">
    <property type="entry name" value="FAD-linked reductases, C-terminal domain"/>
    <property type="match status" value="1"/>
</dbReference>
<dbReference type="SUPFAM" id="SSF51905">
    <property type="entry name" value="FAD/NAD(P)-binding domain"/>
    <property type="match status" value="1"/>
</dbReference>
<gene>
    <name evidence="1" type="primary">mnmC</name>
    <name type="ordered locus">BMA10229_A1628</name>
</gene>
<organism>
    <name type="scientific">Burkholderia mallei (strain NCTC 10229)</name>
    <dbReference type="NCBI Taxonomy" id="412022"/>
    <lineage>
        <taxon>Bacteria</taxon>
        <taxon>Pseudomonadati</taxon>
        <taxon>Pseudomonadota</taxon>
        <taxon>Betaproteobacteria</taxon>
        <taxon>Burkholderiales</taxon>
        <taxon>Burkholderiaceae</taxon>
        <taxon>Burkholderia</taxon>
        <taxon>pseudomallei group</taxon>
    </lineage>
</organism>